<accession>O59763</accession>
<proteinExistence type="evidence at protein level"/>
<dbReference type="EC" id="2.7.11.1"/>
<dbReference type="EMBL" id="CU329672">
    <property type="protein sequence ID" value="CAA18998.1"/>
    <property type="molecule type" value="Genomic_DNA"/>
</dbReference>
<dbReference type="PIR" id="T40830">
    <property type="entry name" value="T40830"/>
</dbReference>
<dbReference type="RefSeq" id="NP_587949.1">
    <property type="nucleotide sequence ID" value="NM_001022940.2"/>
</dbReference>
<dbReference type="SMR" id="O59763"/>
<dbReference type="BioGRID" id="275809">
    <property type="interactions" value="48"/>
</dbReference>
<dbReference type="FunCoup" id="O59763">
    <property type="interactions" value="85"/>
</dbReference>
<dbReference type="STRING" id="284812.O59763"/>
<dbReference type="iPTMnet" id="O59763"/>
<dbReference type="PaxDb" id="4896-SPCC1020.10.1"/>
<dbReference type="EnsemblFungi" id="SPCC1020.10.1">
    <property type="protein sequence ID" value="SPCC1020.10.1:pep"/>
    <property type="gene ID" value="SPCC1020.10"/>
</dbReference>
<dbReference type="GeneID" id="2539239"/>
<dbReference type="KEGG" id="spo:2539239"/>
<dbReference type="PomBase" id="SPCC1020.10">
    <property type="gene designation" value="oca2"/>
</dbReference>
<dbReference type="VEuPathDB" id="FungiDB:SPCC1020.10"/>
<dbReference type="eggNOG" id="KOG0590">
    <property type="taxonomic scope" value="Eukaryota"/>
</dbReference>
<dbReference type="HOGENOM" id="CLU_000288_82_2_1"/>
<dbReference type="InParanoid" id="O59763"/>
<dbReference type="OMA" id="HIAPSIN"/>
<dbReference type="PhylomeDB" id="O59763"/>
<dbReference type="PRO" id="PR:O59763"/>
<dbReference type="Proteomes" id="UP000002485">
    <property type="component" value="Chromosome III"/>
</dbReference>
<dbReference type="GO" id="GO:0032153">
    <property type="term" value="C:cell division site"/>
    <property type="evidence" value="ECO:0007005"/>
    <property type="project" value="PomBase"/>
</dbReference>
<dbReference type="GO" id="GO:0051286">
    <property type="term" value="C:cell tip"/>
    <property type="evidence" value="ECO:0007005"/>
    <property type="project" value="PomBase"/>
</dbReference>
<dbReference type="GO" id="GO:0005829">
    <property type="term" value="C:cytosol"/>
    <property type="evidence" value="ECO:0007005"/>
    <property type="project" value="PomBase"/>
</dbReference>
<dbReference type="GO" id="GO:0005524">
    <property type="term" value="F:ATP binding"/>
    <property type="evidence" value="ECO:0000255"/>
    <property type="project" value="PomBase"/>
</dbReference>
<dbReference type="GO" id="GO:0106310">
    <property type="term" value="F:protein serine kinase activity"/>
    <property type="evidence" value="ECO:0007669"/>
    <property type="project" value="RHEA"/>
</dbReference>
<dbReference type="GO" id="GO:0004674">
    <property type="term" value="F:protein serine/threonine kinase activity"/>
    <property type="evidence" value="ECO:0000314"/>
    <property type="project" value="PomBase"/>
</dbReference>
<dbReference type="GO" id="GO:0000122">
    <property type="term" value="P:negative regulation of transcription by RNA polymerase II"/>
    <property type="evidence" value="ECO:0000315"/>
    <property type="project" value="PomBase"/>
</dbReference>
<dbReference type="GO" id="GO:0006808">
    <property type="term" value="P:regulation of nitrogen utilization"/>
    <property type="evidence" value="ECO:0000315"/>
    <property type="project" value="PomBase"/>
</dbReference>
<dbReference type="GO" id="GO:0023052">
    <property type="term" value="P:signaling"/>
    <property type="evidence" value="ECO:0000303"/>
    <property type="project" value="PomBase"/>
</dbReference>
<dbReference type="FunFam" id="1.10.510.10:FF:000595">
    <property type="entry name" value="Protein kinase, putative (AFU_orthologue AFUA_5G11840)"/>
    <property type="match status" value="1"/>
</dbReference>
<dbReference type="Gene3D" id="3.30.200.20">
    <property type="entry name" value="Phosphorylase Kinase, domain 1"/>
    <property type="match status" value="1"/>
</dbReference>
<dbReference type="Gene3D" id="1.10.510.10">
    <property type="entry name" value="Transferase(Phosphotransferase) domain 1"/>
    <property type="match status" value="1"/>
</dbReference>
<dbReference type="InterPro" id="IPR011009">
    <property type="entry name" value="Kinase-like_dom_sf"/>
</dbReference>
<dbReference type="InterPro" id="IPR000719">
    <property type="entry name" value="Prot_kinase_dom"/>
</dbReference>
<dbReference type="InterPro" id="IPR017441">
    <property type="entry name" value="Protein_kinase_ATP_BS"/>
</dbReference>
<dbReference type="InterPro" id="IPR008271">
    <property type="entry name" value="Ser/Thr_kinase_AS"/>
</dbReference>
<dbReference type="PANTHER" id="PTHR24343">
    <property type="entry name" value="SERINE/THREONINE KINASE"/>
    <property type="match status" value="1"/>
</dbReference>
<dbReference type="PANTHER" id="PTHR24343:SF137">
    <property type="entry name" value="SERINE_THREONINE-PROTEIN KINASE HRK1"/>
    <property type="match status" value="1"/>
</dbReference>
<dbReference type="Pfam" id="PF00069">
    <property type="entry name" value="Pkinase"/>
    <property type="match status" value="1"/>
</dbReference>
<dbReference type="SMART" id="SM00220">
    <property type="entry name" value="S_TKc"/>
    <property type="match status" value="1"/>
</dbReference>
<dbReference type="SUPFAM" id="SSF56112">
    <property type="entry name" value="Protein kinase-like (PK-like)"/>
    <property type="match status" value="1"/>
</dbReference>
<dbReference type="PROSITE" id="PS00107">
    <property type="entry name" value="PROTEIN_KINASE_ATP"/>
    <property type="match status" value="1"/>
</dbReference>
<dbReference type="PROSITE" id="PS50011">
    <property type="entry name" value="PROTEIN_KINASE_DOM"/>
    <property type="match status" value="1"/>
</dbReference>
<dbReference type="PROSITE" id="PS00108">
    <property type="entry name" value="PROTEIN_KINASE_ST"/>
    <property type="match status" value="1"/>
</dbReference>
<organism>
    <name type="scientific">Schizosaccharomyces pombe (strain 972 / ATCC 24843)</name>
    <name type="common">Fission yeast</name>
    <dbReference type="NCBI Taxonomy" id="284812"/>
    <lineage>
        <taxon>Eukaryota</taxon>
        <taxon>Fungi</taxon>
        <taxon>Dikarya</taxon>
        <taxon>Ascomycota</taxon>
        <taxon>Taphrinomycotina</taxon>
        <taxon>Schizosaccharomycetes</taxon>
        <taxon>Schizosaccharomycetales</taxon>
        <taxon>Schizosaccharomycetaceae</taxon>
        <taxon>Schizosaccharomyces</taxon>
    </lineage>
</organism>
<sequence length="650" mass="73232">MSVTPPNVQFNLNGDSDHKSDNSSSSLENKLDTELKITSPPRNPPQRLHPVDFSEHADTDDDMNHPLPRVQSPVHIKNHIDPKLAEDRYRSSAARHFEPISIPPSAITSEDEDDYHGSANSSTVLPPRTENALHAASPKPSGSTGYTSPALSQNSGSGGEGESDEGSFNTQHHRSPIFQAYPSSEDLVGDPNDPYRRTRRAPIKTNPHDIPSQFIFRKLGLHHGKHGHHGHSGSLSLKSLVPNHHDKHDKHDKHEKHHSSLDLRRFFKSHQKTDKEKKPSVSKSKSSANLQDDHFGLFKKYGKFGRMLGSGAGGSVRIMKRSSDGKIFAVKEFRARRPTETEREYARKVTAEFCIGSALHHTNIIETLDIVEENKKFYEVMEYAPYDMFSIVMSGKMTMPEVYCCFKQLLSGVAYLHSMGLAHRDLKLDNLVVDSNCFVKIIDFGSAVVFKYPFEADIVEATGVVGSDPYLAPETLVRKLYDPRAVDIWSSAIIFCCMALRRFPWKYPKLSDNSFRLFCMKQPSNDAESPSDILADIKKQRLVEQGCEPIRKTDESHSPNSKTDNSSTHKQELYGPWRLLRLLPRETRAVIAHMLELDPVKRYDIHRVFADNWINDISMCHMENGKVIHSPTHVHNLVASEESPAPPAKH</sequence>
<protein>
    <recommendedName>
        <fullName>Serine/threonine-protein kinase oca2</fullName>
        <ecNumber>2.7.11.1</ecNumber>
    </recommendedName>
</protein>
<evidence type="ECO:0000250" key="1">
    <source>
        <dbReference type="UniProtKB" id="P00517"/>
    </source>
</evidence>
<evidence type="ECO:0000250" key="2">
    <source>
        <dbReference type="UniProtKB" id="P39009"/>
    </source>
</evidence>
<evidence type="ECO:0000250" key="3">
    <source>
        <dbReference type="UniProtKB" id="Q08732"/>
    </source>
</evidence>
<evidence type="ECO:0000255" key="4">
    <source>
        <dbReference type="PROSITE-ProRule" id="PRU00159"/>
    </source>
</evidence>
<evidence type="ECO:0000255" key="5">
    <source>
        <dbReference type="PROSITE-ProRule" id="PRU10027"/>
    </source>
</evidence>
<evidence type="ECO:0000256" key="6">
    <source>
        <dbReference type="SAM" id="MobiDB-lite"/>
    </source>
</evidence>
<evidence type="ECO:0000269" key="7">
    <source>
    </source>
</evidence>
<evidence type="ECO:0000269" key="8">
    <source>
    </source>
</evidence>
<evidence type="ECO:0000269" key="9">
    <source>
    </source>
</evidence>
<evidence type="ECO:0000305" key="10"/>
<evidence type="ECO:0000312" key="11">
    <source>
        <dbReference type="EMBL" id="CAA18998.1"/>
    </source>
</evidence>
<keyword id="KW-0067">ATP-binding</keyword>
<keyword id="KW-0131">Cell cycle</keyword>
<keyword id="KW-0963">Cytoplasm</keyword>
<keyword id="KW-0418">Kinase</keyword>
<keyword id="KW-0547">Nucleotide-binding</keyword>
<keyword id="KW-0597">Phosphoprotein</keyword>
<keyword id="KW-1185">Reference proteome</keyword>
<keyword id="KW-0723">Serine/threonine-protein kinase</keyword>
<keyword id="KW-0808">Transferase</keyword>
<reference evidence="11" key="1">
    <citation type="journal article" date="2002" name="Nature">
        <title>The genome sequence of Schizosaccharomyces pombe.</title>
        <authorList>
            <person name="Wood V."/>
            <person name="Gwilliam R."/>
            <person name="Rajandream M.A."/>
            <person name="Lyne M.H."/>
            <person name="Lyne R."/>
            <person name="Stewart A."/>
            <person name="Sgouros J.G."/>
            <person name="Peat N."/>
            <person name="Hayles J."/>
            <person name="Baker S.G."/>
            <person name="Basham D."/>
            <person name="Bowman S."/>
            <person name="Brooks K."/>
            <person name="Brown D."/>
            <person name="Brown S."/>
            <person name="Chillingworth T."/>
            <person name="Churcher C.M."/>
            <person name="Collins M."/>
            <person name="Connor R."/>
            <person name="Cronin A."/>
            <person name="Davis P."/>
            <person name="Feltwell T."/>
            <person name="Fraser A."/>
            <person name="Gentles S."/>
            <person name="Goble A."/>
            <person name="Hamlin N."/>
            <person name="Harris D.E."/>
            <person name="Hidalgo J."/>
            <person name="Hodgson G."/>
            <person name="Holroyd S."/>
            <person name="Hornsby T."/>
            <person name="Howarth S."/>
            <person name="Huckle E.J."/>
            <person name="Hunt S."/>
            <person name="Jagels K."/>
            <person name="James K.D."/>
            <person name="Jones L."/>
            <person name="Jones M."/>
            <person name="Leather S."/>
            <person name="McDonald S."/>
            <person name="McLean J."/>
            <person name="Mooney P."/>
            <person name="Moule S."/>
            <person name="Mungall K.L."/>
            <person name="Murphy L.D."/>
            <person name="Niblett D."/>
            <person name="Odell C."/>
            <person name="Oliver K."/>
            <person name="O'Neil S."/>
            <person name="Pearson D."/>
            <person name="Quail M.A."/>
            <person name="Rabbinowitsch E."/>
            <person name="Rutherford K.M."/>
            <person name="Rutter S."/>
            <person name="Saunders D."/>
            <person name="Seeger K."/>
            <person name="Sharp S."/>
            <person name="Skelton J."/>
            <person name="Simmonds M.N."/>
            <person name="Squares R."/>
            <person name="Squares S."/>
            <person name="Stevens K."/>
            <person name="Taylor K."/>
            <person name="Taylor R.G."/>
            <person name="Tivey A."/>
            <person name="Walsh S.V."/>
            <person name="Warren T."/>
            <person name="Whitehead S."/>
            <person name="Woodward J.R."/>
            <person name="Volckaert G."/>
            <person name="Aert R."/>
            <person name="Robben J."/>
            <person name="Grymonprez B."/>
            <person name="Weltjens I."/>
            <person name="Vanstreels E."/>
            <person name="Rieger M."/>
            <person name="Schaefer M."/>
            <person name="Mueller-Auer S."/>
            <person name="Gabel C."/>
            <person name="Fuchs M."/>
            <person name="Duesterhoeft A."/>
            <person name="Fritzc C."/>
            <person name="Holzer E."/>
            <person name="Moestl D."/>
            <person name="Hilbert H."/>
            <person name="Borzym K."/>
            <person name="Langer I."/>
            <person name="Beck A."/>
            <person name="Lehrach H."/>
            <person name="Reinhardt R."/>
            <person name="Pohl T.M."/>
            <person name="Eger P."/>
            <person name="Zimmermann W."/>
            <person name="Wedler H."/>
            <person name="Wambutt R."/>
            <person name="Purnelle B."/>
            <person name="Goffeau A."/>
            <person name="Cadieu E."/>
            <person name="Dreano S."/>
            <person name="Gloux S."/>
            <person name="Lelaure V."/>
            <person name="Mottier S."/>
            <person name="Galibert F."/>
            <person name="Aves S.J."/>
            <person name="Xiang Z."/>
            <person name="Hunt C."/>
            <person name="Moore K."/>
            <person name="Hurst S.M."/>
            <person name="Lucas M."/>
            <person name="Rochet M."/>
            <person name="Gaillardin C."/>
            <person name="Tallada V.A."/>
            <person name="Garzon A."/>
            <person name="Thode G."/>
            <person name="Daga R.R."/>
            <person name="Cruzado L."/>
            <person name="Jimenez J."/>
            <person name="Sanchez M."/>
            <person name="del Rey F."/>
            <person name="Benito J."/>
            <person name="Dominguez A."/>
            <person name="Revuelta J.L."/>
            <person name="Moreno S."/>
            <person name="Armstrong J."/>
            <person name="Forsburg S.L."/>
            <person name="Cerutti L."/>
            <person name="Lowe T."/>
            <person name="McCombie W.R."/>
            <person name="Paulsen I."/>
            <person name="Potashkin J."/>
            <person name="Shpakovski G.V."/>
            <person name="Ussery D."/>
            <person name="Barrell B.G."/>
            <person name="Nurse P."/>
        </authorList>
    </citation>
    <scope>NUCLEOTIDE SEQUENCE [LARGE SCALE GENOMIC DNA]</scope>
    <source>
        <strain>972 / ATCC 24843</strain>
    </source>
</reference>
<reference evidence="10" key="2">
    <citation type="journal article" date="2002" name="Yeast">
        <title>Genome-wide search of Schizosaccharomyces pombe genes causing overexpression-mediated cell cycle defects.</title>
        <authorList>
            <person name="Tallada V.A."/>
            <person name="Daga R.R."/>
            <person name="Palomeque C."/>
            <person name="Garzon A."/>
            <person name="Jimenez J."/>
        </authorList>
    </citation>
    <scope>FUNCTION</scope>
</reference>
<reference evidence="10" key="3">
    <citation type="journal article" date="2006" name="Nat. Biotechnol.">
        <title>ORFeome cloning and global analysis of protein localization in the fission yeast Schizosaccharomyces pombe.</title>
        <authorList>
            <person name="Matsuyama A."/>
            <person name="Arai R."/>
            <person name="Yashiroda Y."/>
            <person name="Shirai A."/>
            <person name="Kamata A."/>
            <person name="Sekido S."/>
            <person name="Kobayashi Y."/>
            <person name="Hashimoto A."/>
            <person name="Hamamoto M."/>
            <person name="Hiraoka Y."/>
            <person name="Horinouchi S."/>
            <person name="Yoshida M."/>
        </authorList>
    </citation>
    <scope>SUBCELLULAR LOCATION [LARGE SCALE ANALYSIS]</scope>
</reference>
<reference evidence="10" key="4">
    <citation type="journal article" date="2008" name="J. Proteome Res.">
        <title>Phosphoproteome analysis of fission yeast.</title>
        <authorList>
            <person name="Wilson-Grady J.T."/>
            <person name="Villen J."/>
            <person name="Gygi S.P."/>
        </authorList>
    </citation>
    <scope>PHOSPHORYLATION [LARGE SCALE ANALYSIS] AT SER-72 AND SER-286</scope>
    <scope>IDENTIFICATION BY MASS SPECTROMETRY</scope>
</reference>
<gene>
    <name evidence="11" type="primary">oca2</name>
    <name type="ORF">SPCC1020.10</name>
</gene>
<name>OCA2_SCHPO</name>
<feature type="chain" id="PRO_0000337145" description="Serine/threonine-protein kinase oca2">
    <location>
        <begin position="1"/>
        <end position="650"/>
    </location>
</feature>
<feature type="domain" description="Protein kinase" evidence="4">
    <location>
        <begin position="302"/>
        <end position="614"/>
    </location>
</feature>
<feature type="region of interest" description="Disordered" evidence="6">
    <location>
        <begin position="1"/>
        <end position="210"/>
    </location>
</feature>
<feature type="region of interest" description="Disordered" evidence="6">
    <location>
        <begin position="222"/>
        <end position="288"/>
    </location>
</feature>
<feature type="region of interest" description="Disordered" evidence="6">
    <location>
        <begin position="549"/>
        <end position="570"/>
    </location>
</feature>
<feature type="compositionally biased region" description="Polar residues" evidence="6">
    <location>
        <begin position="1"/>
        <end position="14"/>
    </location>
</feature>
<feature type="compositionally biased region" description="Basic and acidic residues" evidence="6">
    <location>
        <begin position="78"/>
        <end position="98"/>
    </location>
</feature>
<feature type="compositionally biased region" description="Polar residues" evidence="6">
    <location>
        <begin position="140"/>
        <end position="154"/>
    </location>
</feature>
<feature type="compositionally biased region" description="Basic residues" evidence="6">
    <location>
        <begin position="222"/>
        <end position="231"/>
    </location>
</feature>
<feature type="compositionally biased region" description="Basic residues" evidence="6">
    <location>
        <begin position="245"/>
        <end position="257"/>
    </location>
</feature>
<feature type="compositionally biased region" description="Basic and acidic residues" evidence="6">
    <location>
        <begin position="258"/>
        <end position="279"/>
    </location>
</feature>
<feature type="active site" description="Proton acceptor" evidence="2 4 5">
    <location>
        <position position="425"/>
    </location>
</feature>
<feature type="binding site" evidence="1 4">
    <location>
        <begin position="308"/>
        <end position="316"/>
    </location>
    <ligand>
        <name>ATP</name>
        <dbReference type="ChEBI" id="CHEBI:30616"/>
    </ligand>
</feature>
<feature type="binding site" evidence="2 4">
    <location>
        <position position="331"/>
    </location>
    <ligand>
        <name>ATP</name>
        <dbReference type="ChEBI" id="CHEBI:30616"/>
    </ligand>
</feature>
<feature type="modified residue" description="Phosphoserine" evidence="9">
    <location>
        <position position="72"/>
    </location>
</feature>
<feature type="modified residue" description="Phosphoserine" evidence="9">
    <location>
        <position position="286"/>
    </location>
</feature>
<comment type="function">
    <text evidence="7">Overexpression causes cell cycle arrest.</text>
</comment>
<comment type="catalytic activity">
    <reaction evidence="3">
        <text>L-seryl-[protein] + ATP = O-phospho-L-seryl-[protein] + ADP + H(+)</text>
        <dbReference type="Rhea" id="RHEA:17989"/>
        <dbReference type="Rhea" id="RHEA-COMP:9863"/>
        <dbReference type="Rhea" id="RHEA-COMP:11604"/>
        <dbReference type="ChEBI" id="CHEBI:15378"/>
        <dbReference type="ChEBI" id="CHEBI:29999"/>
        <dbReference type="ChEBI" id="CHEBI:30616"/>
        <dbReference type="ChEBI" id="CHEBI:83421"/>
        <dbReference type="ChEBI" id="CHEBI:456216"/>
        <dbReference type="EC" id="2.7.11.1"/>
    </reaction>
</comment>
<comment type="catalytic activity">
    <reaction evidence="3">
        <text>L-threonyl-[protein] + ATP = O-phospho-L-threonyl-[protein] + ADP + H(+)</text>
        <dbReference type="Rhea" id="RHEA:46608"/>
        <dbReference type="Rhea" id="RHEA-COMP:11060"/>
        <dbReference type="Rhea" id="RHEA-COMP:11605"/>
        <dbReference type="ChEBI" id="CHEBI:15378"/>
        <dbReference type="ChEBI" id="CHEBI:30013"/>
        <dbReference type="ChEBI" id="CHEBI:30616"/>
        <dbReference type="ChEBI" id="CHEBI:61977"/>
        <dbReference type="ChEBI" id="CHEBI:456216"/>
        <dbReference type="EC" id="2.7.11.1"/>
    </reaction>
</comment>
<comment type="subcellular location">
    <subcellularLocation>
        <location evidence="8">Cytoplasm</location>
    </subcellularLocation>
    <text evidence="8">Barrier septum. Cell tip.</text>
</comment>
<comment type="similarity">
    <text evidence="4">Belongs to the protein kinase superfamily. Ser/Thr protein kinase family.</text>
</comment>